<sequence>MLCQYLPPDDRPPSSAPPLLAAHALTYSRNATPILGPLHFHINPGEALIVQGPNGIGKTTLLRILAGLLHSDSGHIDINTHHNTTAPERTRHIAYLSHLPGLKQDLSALENLHFLNALHGYHPQRTPSNALTLVGLTDHAQTLVRQLSAGQKKRLSLAQLWLSPAPLWLLDEPYANLDPEGITLLNHILTAHIHTQGGTLLTTPGARPTLPVPTRLLHLKKAP</sequence>
<reference key="1">
    <citation type="journal article" date="2000" name="Nature">
        <title>The genome sequence of the plant pathogen Xylella fastidiosa.</title>
        <authorList>
            <person name="Simpson A.J.G."/>
            <person name="Reinach F.C."/>
            <person name="Arruda P."/>
            <person name="Abreu F.A."/>
            <person name="Acencio M."/>
            <person name="Alvarenga R."/>
            <person name="Alves L.M.C."/>
            <person name="Araya J.E."/>
            <person name="Baia G.S."/>
            <person name="Baptista C.S."/>
            <person name="Barros M.H."/>
            <person name="Bonaccorsi E.D."/>
            <person name="Bordin S."/>
            <person name="Bove J.M."/>
            <person name="Briones M.R.S."/>
            <person name="Bueno M.R.P."/>
            <person name="Camargo A.A."/>
            <person name="Camargo L.E.A."/>
            <person name="Carraro D.M."/>
            <person name="Carrer H."/>
            <person name="Colauto N.B."/>
            <person name="Colombo C."/>
            <person name="Costa F.F."/>
            <person name="Costa M.C.R."/>
            <person name="Costa-Neto C.M."/>
            <person name="Coutinho L.L."/>
            <person name="Cristofani M."/>
            <person name="Dias-Neto E."/>
            <person name="Docena C."/>
            <person name="El-Dorry H."/>
            <person name="Facincani A.P."/>
            <person name="Ferreira A.J.S."/>
            <person name="Ferreira V.C.A."/>
            <person name="Ferro J.A."/>
            <person name="Fraga J.S."/>
            <person name="Franca S.C."/>
            <person name="Franco M.C."/>
            <person name="Frohme M."/>
            <person name="Furlan L.R."/>
            <person name="Garnier M."/>
            <person name="Goldman G.H."/>
            <person name="Goldman M.H.S."/>
            <person name="Gomes S.L."/>
            <person name="Gruber A."/>
            <person name="Ho P.L."/>
            <person name="Hoheisel J.D."/>
            <person name="Junqueira M.L."/>
            <person name="Kemper E.L."/>
            <person name="Kitajima J.P."/>
            <person name="Krieger J.E."/>
            <person name="Kuramae E.E."/>
            <person name="Laigret F."/>
            <person name="Lambais M.R."/>
            <person name="Leite L.C.C."/>
            <person name="Lemos E.G.M."/>
            <person name="Lemos M.V.F."/>
            <person name="Lopes S.A."/>
            <person name="Lopes C.R."/>
            <person name="Machado J.A."/>
            <person name="Machado M.A."/>
            <person name="Madeira A.M.B.N."/>
            <person name="Madeira H.M.F."/>
            <person name="Marino C.L."/>
            <person name="Marques M.V."/>
            <person name="Martins E.A.L."/>
            <person name="Martins E.M.F."/>
            <person name="Matsukuma A.Y."/>
            <person name="Menck C.F.M."/>
            <person name="Miracca E.C."/>
            <person name="Miyaki C.Y."/>
            <person name="Monteiro-Vitorello C.B."/>
            <person name="Moon D.H."/>
            <person name="Nagai M.A."/>
            <person name="Nascimento A.L.T.O."/>
            <person name="Netto L.E.S."/>
            <person name="Nhani A. Jr."/>
            <person name="Nobrega F.G."/>
            <person name="Nunes L.R."/>
            <person name="Oliveira M.A."/>
            <person name="de Oliveira M.C."/>
            <person name="de Oliveira R.C."/>
            <person name="Palmieri D.A."/>
            <person name="Paris A."/>
            <person name="Peixoto B.R."/>
            <person name="Pereira G.A.G."/>
            <person name="Pereira H.A. Jr."/>
            <person name="Pesquero J.B."/>
            <person name="Quaggio R.B."/>
            <person name="Roberto P.G."/>
            <person name="Rodrigues V."/>
            <person name="de Rosa A.J.M."/>
            <person name="de Rosa V.E. Jr."/>
            <person name="de Sa R.G."/>
            <person name="Santelli R.V."/>
            <person name="Sawasaki H.E."/>
            <person name="da Silva A.C.R."/>
            <person name="da Silva A.M."/>
            <person name="da Silva F.R."/>
            <person name="Silva W.A. Jr."/>
            <person name="da Silveira J.F."/>
            <person name="Silvestri M.L.Z."/>
            <person name="Siqueira W.J."/>
            <person name="de Souza A.A."/>
            <person name="de Souza A.P."/>
            <person name="Terenzi M.F."/>
            <person name="Truffi D."/>
            <person name="Tsai S.M."/>
            <person name="Tsuhako M.H."/>
            <person name="Vallada H."/>
            <person name="Van Sluys M.A."/>
            <person name="Verjovski-Almeida S."/>
            <person name="Vettore A.L."/>
            <person name="Zago M.A."/>
            <person name="Zatz M."/>
            <person name="Meidanis J."/>
            <person name="Setubal J.C."/>
        </authorList>
    </citation>
    <scope>NUCLEOTIDE SEQUENCE [LARGE SCALE GENOMIC DNA]</scope>
    <source>
        <strain>9a5c</strain>
    </source>
</reference>
<evidence type="ECO:0000255" key="1">
    <source>
        <dbReference type="HAMAP-Rule" id="MF_01707"/>
    </source>
</evidence>
<organism>
    <name type="scientific">Xylella fastidiosa (strain 9a5c)</name>
    <dbReference type="NCBI Taxonomy" id="160492"/>
    <lineage>
        <taxon>Bacteria</taxon>
        <taxon>Pseudomonadati</taxon>
        <taxon>Pseudomonadota</taxon>
        <taxon>Gammaproteobacteria</taxon>
        <taxon>Lysobacterales</taxon>
        <taxon>Lysobacteraceae</taxon>
        <taxon>Xylella</taxon>
    </lineage>
</organism>
<keyword id="KW-0067">ATP-binding</keyword>
<keyword id="KW-0997">Cell inner membrane</keyword>
<keyword id="KW-1003">Cell membrane</keyword>
<keyword id="KW-0201">Cytochrome c-type biogenesis</keyword>
<keyword id="KW-0472">Membrane</keyword>
<keyword id="KW-0547">Nucleotide-binding</keyword>
<keyword id="KW-1278">Translocase</keyword>
<keyword id="KW-0813">Transport</keyword>
<accession>Q9PAP0</accession>
<comment type="function">
    <text evidence="1">Part of the ABC transporter complex CcmAB involved in the biogenesis of c-type cytochromes; once thought to export heme, this seems not to be the case, but its exact role is uncertain. Responsible for energy coupling to the transport system.</text>
</comment>
<comment type="catalytic activity">
    <reaction evidence="1">
        <text>heme b(in) + ATP + H2O = heme b(out) + ADP + phosphate + H(+)</text>
        <dbReference type="Rhea" id="RHEA:19261"/>
        <dbReference type="ChEBI" id="CHEBI:15377"/>
        <dbReference type="ChEBI" id="CHEBI:15378"/>
        <dbReference type="ChEBI" id="CHEBI:30616"/>
        <dbReference type="ChEBI" id="CHEBI:43474"/>
        <dbReference type="ChEBI" id="CHEBI:60344"/>
        <dbReference type="ChEBI" id="CHEBI:456216"/>
        <dbReference type="EC" id="7.6.2.5"/>
    </reaction>
</comment>
<comment type="subunit">
    <text evidence="1">The complex is composed of two ATP-binding proteins (CcmA) and two transmembrane proteins (CcmB).</text>
</comment>
<comment type="subcellular location">
    <subcellularLocation>
        <location evidence="1">Cell inner membrane</location>
        <topology evidence="1">Peripheral membrane protein</topology>
    </subcellularLocation>
</comment>
<comment type="similarity">
    <text evidence="1">Belongs to the ABC transporter superfamily. CcmA exporter (TC 3.A.1.107) family.</text>
</comment>
<proteinExistence type="inferred from homology"/>
<protein>
    <recommendedName>
        <fullName evidence="1">Cytochrome c biogenesis ATP-binding export protein CcmA</fullName>
        <ecNumber evidence="1">7.6.2.5</ecNumber>
    </recommendedName>
    <alternativeName>
        <fullName evidence="1">Heme exporter protein A</fullName>
    </alternativeName>
</protein>
<feature type="chain" id="PRO_0000092224" description="Cytochrome c biogenesis ATP-binding export protein CcmA">
    <location>
        <begin position="1"/>
        <end position="223"/>
    </location>
</feature>
<feature type="domain" description="ABC transporter" evidence="1">
    <location>
        <begin position="20"/>
        <end position="222"/>
    </location>
</feature>
<feature type="binding site" evidence="1">
    <location>
        <begin position="52"/>
        <end position="59"/>
    </location>
    <ligand>
        <name>ATP</name>
        <dbReference type="ChEBI" id="CHEBI:30616"/>
    </ligand>
</feature>
<dbReference type="EC" id="7.6.2.5" evidence="1"/>
<dbReference type="EMBL" id="AE003849">
    <property type="protein sequence ID" value="AAF85254.1"/>
    <property type="molecule type" value="Genomic_DNA"/>
</dbReference>
<dbReference type="PIR" id="C82555">
    <property type="entry name" value="C82555"/>
</dbReference>
<dbReference type="RefSeq" id="WP_010894899.1">
    <property type="nucleotide sequence ID" value="NC_002488.3"/>
</dbReference>
<dbReference type="SMR" id="Q9PAP0"/>
<dbReference type="STRING" id="160492.XF_2455"/>
<dbReference type="KEGG" id="xfa:XF_2455"/>
<dbReference type="PATRIC" id="fig|160492.11.peg.2605"/>
<dbReference type="eggNOG" id="COG4133">
    <property type="taxonomic scope" value="Bacteria"/>
</dbReference>
<dbReference type="HOGENOM" id="CLU_000604_1_2_6"/>
<dbReference type="Proteomes" id="UP000000812">
    <property type="component" value="Chromosome"/>
</dbReference>
<dbReference type="GO" id="GO:0005886">
    <property type="term" value="C:plasma membrane"/>
    <property type="evidence" value="ECO:0007669"/>
    <property type="project" value="UniProtKB-SubCell"/>
</dbReference>
<dbReference type="GO" id="GO:0015439">
    <property type="term" value="F:ABC-type heme transporter activity"/>
    <property type="evidence" value="ECO:0007669"/>
    <property type="project" value="UniProtKB-EC"/>
</dbReference>
<dbReference type="GO" id="GO:0005524">
    <property type="term" value="F:ATP binding"/>
    <property type="evidence" value="ECO:0007669"/>
    <property type="project" value="UniProtKB-KW"/>
</dbReference>
<dbReference type="GO" id="GO:0016887">
    <property type="term" value="F:ATP hydrolysis activity"/>
    <property type="evidence" value="ECO:0007669"/>
    <property type="project" value="InterPro"/>
</dbReference>
<dbReference type="GO" id="GO:0017004">
    <property type="term" value="P:cytochrome complex assembly"/>
    <property type="evidence" value="ECO:0007669"/>
    <property type="project" value="UniProtKB-KW"/>
</dbReference>
<dbReference type="Gene3D" id="3.40.50.300">
    <property type="entry name" value="P-loop containing nucleotide triphosphate hydrolases"/>
    <property type="match status" value="1"/>
</dbReference>
<dbReference type="InterPro" id="IPR003593">
    <property type="entry name" value="AAA+_ATPase"/>
</dbReference>
<dbReference type="InterPro" id="IPR003439">
    <property type="entry name" value="ABC_transporter-like_ATP-bd"/>
</dbReference>
<dbReference type="InterPro" id="IPR017871">
    <property type="entry name" value="ABC_transporter-like_CS"/>
</dbReference>
<dbReference type="InterPro" id="IPR005895">
    <property type="entry name" value="ABC_transptr_haem_export_CcmA"/>
</dbReference>
<dbReference type="InterPro" id="IPR027417">
    <property type="entry name" value="P-loop_NTPase"/>
</dbReference>
<dbReference type="NCBIfam" id="TIGR01189">
    <property type="entry name" value="ccmA"/>
    <property type="match status" value="1"/>
</dbReference>
<dbReference type="PANTHER" id="PTHR43499">
    <property type="entry name" value="ABC TRANSPORTER I FAMILY MEMBER 1"/>
    <property type="match status" value="1"/>
</dbReference>
<dbReference type="PANTHER" id="PTHR43499:SF1">
    <property type="entry name" value="ABC TRANSPORTER I FAMILY MEMBER 1"/>
    <property type="match status" value="1"/>
</dbReference>
<dbReference type="Pfam" id="PF00005">
    <property type="entry name" value="ABC_tran"/>
    <property type="match status" value="1"/>
</dbReference>
<dbReference type="SMART" id="SM00382">
    <property type="entry name" value="AAA"/>
    <property type="match status" value="1"/>
</dbReference>
<dbReference type="SUPFAM" id="SSF52540">
    <property type="entry name" value="P-loop containing nucleoside triphosphate hydrolases"/>
    <property type="match status" value="1"/>
</dbReference>
<dbReference type="PROSITE" id="PS00211">
    <property type="entry name" value="ABC_TRANSPORTER_1"/>
    <property type="match status" value="1"/>
</dbReference>
<dbReference type="PROSITE" id="PS50893">
    <property type="entry name" value="ABC_TRANSPORTER_2"/>
    <property type="match status" value="1"/>
</dbReference>
<dbReference type="PROSITE" id="PS51243">
    <property type="entry name" value="CCMA"/>
    <property type="match status" value="1"/>
</dbReference>
<name>CCMA_XYLFA</name>
<gene>
    <name evidence="1" type="primary">ccmA</name>
    <name type="ordered locus">XF_2455</name>
</gene>